<proteinExistence type="inferred from homology"/>
<evidence type="ECO:0000255" key="1">
    <source>
        <dbReference type="HAMAP-Rule" id="MF_01646"/>
    </source>
</evidence>
<dbReference type="EC" id="2.1.1.107" evidence="1"/>
<dbReference type="EC" id="1.3.1.76" evidence="1"/>
<dbReference type="EC" id="4.99.1.4" evidence="1"/>
<dbReference type="EMBL" id="CT573326">
    <property type="protein sequence ID" value="CAK15036.1"/>
    <property type="molecule type" value="Genomic_DNA"/>
</dbReference>
<dbReference type="RefSeq" id="WP_011533438.1">
    <property type="nucleotide sequence ID" value="NC_008027.1"/>
</dbReference>
<dbReference type="SMR" id="Q1IBC9"/>
<dbReference type="STRING" id="384676.PSEEN2217"/>
<dbReference type="GeneID" id="32805415"/>
<dbReference type="KEGG" id="pen:PSEEN2217"/>
<dbReference type="eggNOG" id="COG0007">
    <property type="taxonomic scope" value="Bacteria"/>
</dbReference>
<dbReference type="eggNOG" id="COG1648">
    <property type="taxonomic scope" value="Bacteria"/>
</dbReference>
<dbReference type="HOGENOM" id="CLU_011276_2_1_6"/>
<dbReference type="OrthoDB" id="9815856at2"/>
<dbReference type="UniPathway" id="UPA00148">
    <property type="reaction ID" value="UER00211"/>
</dbReference>
<dbReference type="UniPathway" id="UPA00148">
    <property type="reaction ID" value="UER00222"/>
</dbReference>
<dbReference type="UniPathway" id="UPA00262">
    <property type="reaction ID" value="UER00211"/>
</dbReference>
<dbReference type="UniPathway" id="UPA00262">
    <property type="reaction ID" value="UER00222"/>
</dbReference>
<dbReference type="UniPathway" id="UPA00262">
    <property type="reaction ID" value="UER00376"/>
</dbReference>
<dbReference type="Proteomes" id="UP000000658">
    <property type="component" value="Chromosome"/>
</dbReference>
<dbReference type="GO" id="GO:0051287">
    <property type="term" value="F:NAD binding"/>
    <property type="evidence" value="ECO:0007669"/>
    <property type="project" value="InterPro"/>
</dbReference>
<dbReference type="GO" id="GO:0043115">
    <property type="term" value="F:precorrin-2 dehydrogenase activity"/>
    <property type="evidence" value="ECO:0007669"/>
    <property type="project" value="UniProtKB-UniRule"/>
</dbReference>
<dbReference type="GO" id="GO:0051266">
    <property type="term" value="F:sirohydrochlorin ferrochelatase activity"/>
    <property type="evidence" value="ECO:0007669"/>
    <property type="project" value="UniProtKB-EC"/>
</dbReference>
<dbReference type="GO" id="GO:0004851">
    <property type="term" value="F:uroporphyrin-III C-methyltransferase activity"/>
    <property type="evidence" value="ECO:0007669"/>
    <property type="project" value="UniProtKB-UniRule"/>
</dbReference>
<dbReference type="GO" id="GO:0009236">
    <property type="term" value="P:cobalamin biosynthetic process"/>
    <property type="evidence" value="ECO:0007669"/>
    <property type="project" value="UniProtKB-UniRule"/>
</dbReference>
<dbReference type="GO" id="GO:0032259">
    <property type="term" value="P:methylation"/>
    <property type="evidence" value="ECO:0007669"/>
    <property type="project" value="UniProtKB-KW"/>
</dbReference>
<dbReference type="GO" id="GO:0019354">
    <property type="term" value="P:siroheme biosynthetic process"/>
    <property type="evidence" value="ECO:0007669"/>
    <property type="project" value="UniProtKB-UniRule"/>
</dbReference>
<dbReference type="CDD" id="cd11642">
    <property type="entry name" value="SUMT"/>
    <property type="match status" value="1"/>
</dbReference>
<dbReference type="FunFam" id="3.30.160.110:FF:000001">
    <property type="entry name" value="Siroheme synthase"/>
    <property type="match status" value="1"/>
</dbReference>
<dbReference type="FunFam" id="3.30.950.10:FF:000001">
    <property type="entry name" value="Siroheme synthase"/>
    <property type="match status" value="1"/>
</dbReference>
<dbReference type="FunFam" id="3.40.1010.10:FF:000001">
    <property type="entry name" value="Siroheme synthase"/>
    <property type="match status" value="1"/>
</dbReference>
<dbReference type="Gene3D" id="3.40.1010.10">
    <property type="entry name" value="Cobalt-precorrin-4 Transmethylase, Domain 1"/>
    <property type="match status" value="1"/>
</dbReference>
<dbReference type="Gene3D" id="3.30.950.10">
    <property type="entry name" value="Methyltransferase, Cobalt-precorrin-4 Transmethylase, Domain 2"/>
    <property type="match status" value="1"/>
</dbReference>
<dbReference type="Gene3D" id="3.40.50.720">
    <property type="entry name" value="NAD(P)-binding Rossmann-like Domain"/>
    <property type="match status" value="1"/>
</dbReference>
<dbReference type="Gene3D" id="1.10.8.210">
    <property type="entry name" value="Sirohaem synthase, dimerisation domain"/>
    <property type="match status" value="1"/>
</dbReference>
<dbReference type="Gene3D" id="3.30.160.110">
    <property type="entry name" value="Siroheme synthase, domain 2"/>
    <property type="match status" value="1"/>
</dbReference>
<dbReference type="HAMAP" id="MF_01646">
    <property type="entry name" value="Siroheme_synth"/>
    <property type="match status" value="1"/>
</dbReference>
<dbReference type="InterPro" id="IPR000878">
    <property type="entry name" value="4pyrrol_Mease"/>
</dbReference>
<dbReference type="InterPro" id="IPR035996">
    <property type="entry name" value="4pyrrol_Methylase_sf"/>
</dbReference>
<dbReference type="InterPro" id="IPR014777">
    <property type="entry name" value="4pyrrole_Mease_sub1"/>
</dbReference>
<dbReference type="InterPro" id="IPR014776">
    <property type="entry name" value="4pyrrole_Mease_sub2"/>
</dbReference>
<dbReference type="InterPro" id="IPR006366">
    <property type="entry name" value="CobA/CysG_C"/>
</dbReference>
<dbReference type="InterPro" id="IPR036291">
    <property type="entry name" value="NAD(P)-bd_dom_sf"/>
</dbReference>
<dbReference type="InterPro" id="IPR050161">
    <property type="entry name" value="Siro_Cobalamin_biosynth"/>
</dbReference>
<dbReference type="InterPro" id="IPR037115">
    <property type="entry name" value="Sirohaem_synt_dimer_dom_sf"/>
</dbReference>
<dbReference type="InterPro" id="IPR012409">
    <property type="entry name" value="Sirohaem_synth"/>
</dbReference>
<dbReference type="InterPro" id="IPR028281">
    <property type="entry name" value="Sirohaem_synthase_central"/>
</dbReference>
<dbReference type="InterPro" id="IPR019478">
    <property type="entry name" value="Sirohaem_synthase_dimer_dom"/>
</dbReference>
<dbReference type="InterPro" id="IPR006367">
    <property type="entry name" value="Sirohaem_synthase_N"/>
</dbReference>
<dbReference type="InterPro" id="IPR003043">
    <property type="entry name" value="Uropor_MeTrfase_CS"/>
</dbReference>
<dbReference type="NCBIfam" id="TIGR01469">
    <property type="entry name" value="cobA_cysG_Cterm"/>
    <property type="match status" value="1"/>
</dbReference>
<dbReference type="NCBIfam" id="TIGR01470">
    <property type="entry name" value="cysG_Nterm"/>
    <property type="match status" value="1"/>
</dbReference>
<dbReference type="NCBIfam" id="NF004790">
    <property type="entry name" value="PRK06136.1"/>
    <property type="match status" value="1"/>
</dbReference>
<dbReference type="NCBIfam" id="NF007922">
    <property type="entry name" value="PRK10637.1"/>
    <property type="match status" value="1"/>
</dbReference>
<dbReference type="PANTHER" id="PTHR45790:SF1">
    <property type="entry name" value="SIROHEME SYNTHASE"/>
    <property type="match status" value="1"/>
</dbReference>
<dbReference type="PANTHER" id="PTHR45790">
    <property type="entry name" value="SIROHEME SYNTHASE-RELATED"/>
    <property type="match status" value="1"/>
</dbReference>
<dbReference type="Pfam" id="PF10414">
    <property type="entry name" value="CysG_dimeriser"/>
    <property type="match status" value="1"/>
</dbReference>
<dbReference type="Pfam" id="PF13241">
    <property type="entry name" value="NAD_binding_7"/>
    <property type="match status" value="1"/>
</dbReference>
<dbReference type="Pfam" id="PF14824">
    <property type="entry name" value="Sirohm_synth_M"/>
    <property type="match status" value="1"/>
</dbReference>
<dbReference type="Pfam" id="PF00590">
    <property type="entry name" value="TP_methylase"/>
    <property type="match status" value="1"/>
</dbReference>
<dbReference type="PIRSF" id="PIRSF036426">
    <property type="entry name" value="Sirohaem_synth"/>
    <property type="match status" value="1"/>
</dbReference>
<dbReference type="SUPFAM" id="SSF51735">
    <property type="entry name" value="NAD(P)-binding Rossmann-fold domains"/>
    <property type="match status" value="1"/>
</dbReference>
<dbReference type="SUPFAM" id="SSF75615">
    <property type="entry name" value="Siroheme synthase middle domains-like"/>
    <property type="match status" value="1"/>
</dbReference>
<dbReference type="SUPFAM" id="SSF53790">
    <property type="entry name" value="Tetrapyrrole methylase"/>
    <property type="match status" value="1"/>
</dbReference>
<dbReference type="PROSITE" id="PS00840">
    <property type="entry name" value="SUMT_2"/>
    <property type="match status" value="1"/>
</dbReference>
<name>CYSG_PSEE4</name>
<feature type="chain" id="PRO_0000330536" description="Siroheme synthase">
    <location>
        <begin position="1"/>
        <end position="463"/>
    </location>
</feature>
<feature type="region of interest" description="Precorrin-2 dehydrogenase /sirohydrochlorin ferrochelatase" evidence="1">
    <location>
        <begin position="1"/>
        <end position="203"/>
    </location>
</feature>
<feature type="region of interest" description="Uroporphyrinogen-III C-methyltransferase" evidence="1">
    <location>
        <begin position="216"/>
        <end position="463"/>
    </location>
</feature>
<feature type="active site" description="Proton acceptor" evidence="1">
    <location>
        <position position="248"/>
    </location>
</feature>
<feature type="active site" description="Proton donor" evidence="1">
    <location>
        <position position="270"/>
    </location>
</feature>
<feature type="binding site" evidence="1">
    <location>
        <begin position="22"/>
        <end position="23"/>
    </location>
    <ligand>
        <name>NAD(+)</name>
        <dbReference type="ChEBI" id="CHEBI:57540"/>
    </ligand>
</feature>
<feature type="binding site" evidence="1">
    <location>
        <begin position="43"/>
        <end position="44"/>
    </location>
    <ligand>
        <name>NAD(+)</name>
        <dbReference type="ChEBI" id="CHEBI:57540"/>
    </ligand>
</feature>
<feature type="binding site" evidence="1">
    <location>
        <position position="225"/>
    </location>
    <ligand>
        <name>S-adenosyl-L-methionine</name>
        <dbReference type="ChEBI" id="CHEBI:59789"/>
    </ligand>
</feature>
<feature type="binding site" evidence="1">
    <location>
        <begin position="301"/>
        <end position="303"/>
    </location>
    <ligand>
        <name>S-adenosyl-L-methionine</name>
        <dbReference type="ChEBI" id="CHEBI:59789"/>
    </ligand>
</feature>
<feature type="binding site" evidence="1">
    <location>
        <position position="306"/>
    </location>
    <ligand>
        <name>S-adenosyl-L-methionine</name>
        <dbReference type="ChEBI" id="CHEBI:59789"/>
    </ligand>
</feature>
<feature type="binding site" evidence="1">
    <location>
        <begin position="331"/>
        <end position="332"/>
    </location>
    <ligand>
        <name>S-adenosyl-L-methionine</name>
        <dbReference type="ChEBI" id="CHEBI:59789"/>
    </ligand>
</feature>
<feature type="binding site" evidence="1">
    <location>
        <position position="383"/>
    </location>
    <ligand>
        <name>S-adenosyl-L-methionine</name>
        <dbReference type="ChEBI" id="CHEBI:59789"/>
    </ligand>
</feature>
<feature type="binding site" evidence="1">
    <location>
        <position position="412"/>
    </location>
    <ligand>
        <name>S-adenosyl-L-methionine</name>
        <dbReference type="ChEBI" id="CHEBI:59789"/>
    </ligand>
</feature>
<feature type="modified residue" description="Phosphoserine" evidence="1">
    <location>
        <position position="128"/>
    </location>
</feature>
<protein>
    <recommendedName>
        <fullName evidence="1">Siroheme synthase</fullName>
    </recommendedName>
    <domain>
        <recommendedName>
            <fullName evidence="1">Uroporphyrinogen-III C-methyltransferase</fullName>
            <shortName evidence="1">Urogen III methylase</shortName>
            <ecNumber evidence="1">2.1.1.107</ecNumber>
        </recommendedName>
        <alternativeName>
            <fullName evidence="1">SUMT</fullName>
        </alternativeName>
        <alternativeName>
            <fullName evidence="1">Uroporphyrinogen III methylase</fullName>
            <shortName evidence="1">UROM</shortName>
        </alternativeName>
    </domain>
    <domain>
        <recommendedName>
            <fullName evidence="1">Precorrin-2 dehydrogenase</fullName>
            <ecNumber evidence="1">1.3.1.76</ecNumber>
        </recommendedName>
    </domain>
    <domain>
        <recommendedName>
            <fullName evidence="1">Sirohydrochlorin ferrochelatase</fullName>
            <ecNumber evidence="1">4.99.1.4</ecNumber>
        </recommendedName>
    </domain>
</protein>
<gene>
    <name evidence="1" type="primary">cysG</name>
    <name type="ordered locus">PSEEN2217</name>
</gene>
<comment type="function">
    <text evidence="1">Multifunctional enzyme that catalyzes the SAM-dependent methylations of uroporphyrinogen III at position C-2 and C-7 to form precorrin-2 via precorrin-1. Then it catalyzes the NAD-dependent ring dehydrogenation of precorrin-2 to yield sirohydrochlorin. Finally, it catalyzes the ferrochelation of sirohydrochlorin to yield siroheme.</text>
</comment>
<comment type="catalytic activity">
    <reaction evidence="1">
        <text>uroporphyrinogen III + 2 S-adenosyl-L-methionine = precorrin-2 + 2 S-adenosyl-L-homocysteine + H(+)</text>
        <dbReference type="Rhea" id="RHEA:32459"/>
        <dbReference type="ChEBI" id="CHEBI:15378"/>
        <dbReference type="ChEBI" id="CHEBI:57308"/>
        <dbReference type="ChEBI" id="CHEBI:57856"/>
        <dbReference type="ChEBI" id="CHEBI:58827"/>
        <dbReference type="ChEBI" id="CHEBI:59789"/>
        <dbReference type="EC" id="2.1.1.107"/>
    </reaction>
</comment>
<comment type="catalytic activity">
    <reaction evidence="1">
        <text>precorrin-2 + NAD(+) = sirohydrochlorin + NADH + 2 H(+)</text>
        <dbReference type="Rhea" id="RHEA:15613"/>
        <dbReference type="ChEBI" id="CHEBI:15378"/>
        <dbReference type="ChEBI" id="CHEBI:57540"/>
        <dbReference type="ChEBI" id="CHEBI:57945"/>
        <dbReference type="ChEBI" id="CHEBI:58351"/>
        <dbReference type="ChEBI" id="CHEBI:58827"/>
        <dbReference type="EC" id="1.3.1.76"/>
    </reaction>
</comment>
<comment type="catalytic activity">
    <reaction evidence="1">
        <text>siroheme + 2 H(+) = sirohydrochlorin + Fe(2+)</text>
        <dbReference type="Rhea" id="RHEA:24360"/>
        <dbReference type="ChEBI" id="CHEBI:15378"/>
        <dbReference type="ChEBI" id="CHEBI:29033"/>
        <dbReference type="ChEBI" id="CHEBI:58351"/>
        <dbReference type="ChEBI" id="CHEBI:60052"/>
        <dbReference type="EC" id="4.99.1.4"/>
    </reaction>
</comment>
<comment type="pathway">
    <text evidence="1">Cofactor biosynthesis; adenosylcobalamin biosynthesis; precorrin-2 from uroporphyrinogen III: step 1/1.</text>
</comment>
<comment type="pathway">
    <text evidence="1">Cofactor biosynthesis; adenosylcobalamin biosynthesis; sirohydrochlorin from precorrin-2: step 1/1.</text>
</comment>
<comment type="pathway">
    <text evidence="1">Porphyrin-containing compound metabolism; siroheme biosynthesis; precorrin-2 from uroporphyrinogen III: step 1/1.</text>
</comment>
<comment type="pathway">
    <text evidence="1">Porphyrin-containing compound metabolism; siroheme biosynthesis; siroheme from sirohydrochlorin: step 1/1.</text>
</comment>
<comment type="pathway">
    <text evidence="1">Porphyrin-containing compound metabolism; siroheme biosynthesis; sirohydrochlorin from precorrin-2: step 1/1.</text>
</comment>
<comment type="similarity">
    <text evidence="1">In the N-terminal section; belongs to the precorrin-2 dehydrogenase / sirohydrochlorin ferrochelatase family.</text>
</comment>
<comment type="similarity">
    <text evidence="1">In the C-terminal section; belongs to the precorrin methyltransferase family.</text>
</comment>
<accession>Q1IBC9</accession>
<sequence>MDYLPLFHKLQGGRALVVGGGEIALRKARLLADAGAALRVVAPEVDGQLAALAREGGGEVLVRGYQSSDLDGCRLVIAATDDPGLNAQVSAHAQARSLPVNVVDAPALCTVIFPAIVDRSPLVVAVSSGGDAPVLARLIRAKLEAWIPSAYGELAGLAARFRDKVKALYPDVNQRRGFWENVFQGPIAERQLAGQGAEAERLLQAMVDGAPVQQGGEVYLVGAGPGDPDLLTFRALRLMQQADVVLYDRLVAPAIIEMCRRDAERIYVGKRRADHAVPQDQINRLLVDLARQGKRVLRLKGGDPFIFGRGGEEIEELADEGIPFQVVPGITAASGCSAYGGIPLTHRDYAQSVRFVTGHLKDGTSNLPWNDLVAPAQTLVFYMGLVGLPTICAELIRHGRAASTPAALVQQGTTRNQRVFTGTLADLPELVARHEVHAPTLVIVGEVVKLRDKLAWFEGAQNS</sequence>
<reference key="1">
    <citation type="journal article" date="2006" name="Nat. Biotechnol.">
        <title>Complete genome sequence of the entomopathogenic and metabolically versatile soil bacterium Pseudomonas entomophila.</title>
        <authorList>
            <person name="Vodovar N."/>
            <person name="Vallenet D."/>
            <person name="Cruveiller S."/>
            <person name="Rouy Z."/>
            <person name="Barbe V."/>
            <person name="Acosta C."/>
            <person name="Cattolico L."/>
            <person name="Jubin C."/>
            <person name="Lajus A."/>
            <person name="Segurens B."/>
            <person name="Vacherie B."/>
            <person name="Wincker P."/>
            <person name="Weissenbach J."/>
            <person name="Lemaitre B."/>
            <person name="Medigue C."/>
            <person name="Boccard F."/>
        </authorList>
    </citation>
    <scope>NUCLEOTIDE SEQUENCE [LARGE SCALE GENOMIC DNA]</scope>
    <source>
        <strain>L48</strain>
    </source>
</reference>
<organism>
    <name type="scientific">Pseudomonas entomophila (strain L48)</name>
    <dbReference type="NCBI Taxonomy" id="384676"/>
    <lineage>
        <taxon>Bacteria</taxon>
        <taxon>Pseudomonadati</taxon>
        <taxon>Pseudomonadota</taxon>
        <taxon>Gammaproteobacteria</taxon>
        <taxon>Pseudomonadales</taxon>
        <taxon>Pseudomonadaceae</taxon>
        <taxon>Pseudomonas</taxon>
    </lineage>
</organism>
<keyword id="KW-0169">Cobalamin biosynthesis</keyword>
<keyword id="KW-0456">Lyase</keyword>
<keyword id="KW-0489">Methyltransferase</keyword>
<keyword id="KW-0511">Multifunctional enzyme</keyword>
<keyword id="KW-0520">NAD</keyword>
<keyword id="KW-0560">Oxidoreductase</keyword>
<keyword id="KW-0597">Phosphoprotein</keyword>
<keyword id="KW-0627">Porphyrin biosynthesis</keyword>
<keyword id="KW-0949">S-adenosyl-L-methionine</keyword>
<keyword id="KW-0808">Transferase</keyword>